<name>SCAI_HUMAN</name>
<comment type="function">
    <text evidence="5">Tumor suppressor which functions to suppress MRTFA-induced SRF transcriptional activity. May function in the RHOA-DIAPH1 signal transduction pathway and regulate cell migration through transcriptional regulation of ITGB1.</text>
</comment>
<comment type="subunit">
    <text evidence="1 5">Interacts with DIAPH1 (By similarity). Forms a nuclear ternary complex with MRTFA and SRF.</text>
</comment>
<comment type="interaction">
    <interactant intactId="EBI-4395514">
        <id>Q8N9R8</id>
    </interactant>
    <interactant intactId="EBI-358858">
        <id>O14735</id>
        <label>CDIPT</label>
    </interactant>
    <organismsDiffer>false</organismsDiffer>
    <experiments>3</experiments>
</comment>
<comment type="interaction">
    <interactant intactId="EBI-4395514">
        <id>Q8N9R8</id>
    </interactant>
    <interactant intactId="EBI-751388">
        <id>P27987</id>
        <label>ITPKB</label>
    </interactant>
    <organismsDiffer>false</organismsDiffer>
    <experiments>3</experiments>
</comment>
<comment type="interaction">
    <interactant intactId="EBI-4395514">
        <id>Q8N9R8</id>
    </interactant>
    <interactant intactId="EBI-11536584">
        <id>O15294-3</id>
        <label>OGT</label>
    </interactant>
    <organismsDiffer>false</organismsDiffer>
    <experiments>3</experiments>
</comment>
<comment type="interaction">
    <interactant intactId="EBI-4395514">
        <id>Q8N9R8</id>
    </interactant>
    <interactant intactId="EBI-714158">
        <id>Q13526</id>
        <label>PIN1</label>
    </interactant>
    <organismsDiffer>false</organismsDiffer>
    <experiments>3</experiments>
</comment>
<comment type="interaction">
    <interactant intactId="EBI-4395514">
        <id>Q8N9R8</id>
    </interactant>
    <interactant intactId="EBI-7239117">
        <id>Q9BT81</id>
        <label>SOX7</label>
    </interactant>
    <organismsDiffer>false</organismsDiffer>
    <experiments>3</experiments>
</comment>
<comment type="subcellular location">
    <subcellularLocation>
        <location evidence="8">Membrane</location>
        <topology evidence="8">Single-pass membrane protein</topology>
    </subcellularLocation>
    <subcellularLocation>
        <location evidence="5">Nucleus</location>
    </subcellularLocation>
    <subcellularLocation>
        <location evidence="5">Cytoplasm</location>
    </subcellularLocation>
    <text evidence="1">Nuclear localization is required for inhibition of MRTFA.</text>
</comment>
<comment type="alternative products">
    <event type="alternative splicing"/>
    <isoform>
        <id>Q8N9R8-1</id>
        <name>1</name>
        <sequence type="displayed"/>
    </isoform>
    <isoform>
        <id>Q8N9R8-2</id>
        <name>2</name>
        <sequence type="described" ref="VSP_015120"/>
    </isoform>
</comment>
<comment type="similarity">
    <text evidence="8">Belongs to the SCAI family.</text>
</comment>
<accession>Q8N9R8</accession>
<accession>Q3SXZ1</accession>
<accession>Q3SXZ2</accession>
<accession>Q5T163</accession>
<accession>Q8N1I4</accession>
<sequence length="606" mass="70399">MVRGARQPQQPRSRLAPRLTGTVEKPPRKRRSRTEFALKEIMSSGGAEDDIPQGERKTVTDFCYLLDKSKQLFNGLRDLPQYGQKQWQSYFGRTFDVYTKLWKFQQQHRQVLDNRYGLKRWQIGEIASKIGQLYYHYYLRTSETSYLNEAFSFYSAIRQRSYYSQVNKEDRPELVVKKLRYYARFIVVCLLLNKMDVVKDLVKELSDEIEDYTHRFNTEDQVEWNLVLQEVAAFIEADPVMVLNDDNTIVITSNRLAETGAPLLEQGMIVGQLSLADALIIGNCNNQVKFSELTVDMFRMLQALEREPMNLASQMNKPGMQESADKPTRRENPHKYLLYKPTFSQLYTFLAASFKELPANSVLLIYLSATGVFPTGRSDSEGPYDFGGVLTNSNRDIINGDAIHKRNQSHKEMHCLHPGDLYPFTRKPLFIIVDSSNSVAYKNFTNLFGQPLVCLLSPTAYPKALQDQSQRGSLFTLFLNNPLMAFLFVSGLSSMRRGLWEKCQEYLRKINRDIAQLLTHSRSIDQAFLQFFGDEFLRLLLTRFIFCSATMRMHKIFRETRNYPESYPQLPRDETVENPHLQKHILELASILDVRNVFFENTIDDY</sequence>
<keyword id="KW-0025">Alternative splicing</keyword>
<keyword id="KW-0963">Cytoplasm</keyword>
<keyword id="KW-0472">Membrane</keyword>
<keyword id="KW-0539">Nucleus</keyword>
<keyword id="KW-0597">Phosphoprotein</keyword>
<keyword id="KW-1267">Proteomics identification</keyword>
<keyword id="KW-1185">Reference proteome</keyword>
<keyword id="KW-0678">Repressor</keyword>
<keyword id="KW-0734">Signal transduction inhibitor</keyword>
<keyword id="KW-0804">Transcription</keyword>
<keyword id="KW-0805">Transcription regulation</keyword>
<keyword id="KW-0812">Transmembrane</keyword>
<keyword id="KW-1133">Transmembrane helix</keyword>
<reference key="1">
    <citation type="journal article" date="2004" name="Nat. Genet.">
        <title>Complete sequencing and characterization of 21,243 full-length human cDNAs.</title>
        <authorList>
            <person name="Ota T."/>
            <person name="Suzuki Y."/>
            <person name="Nishikawa T."/>
            <person name="Otsuki T."/>
            <person name="Sugiyama T."/>
            <person name="Irie R."/>
            <person name="Wakamatsu A."/>
            <person name="Hayashi K."/>
            <person name="Sato H."/>
            <person name="Nagai K."/>
            <person name="Kimura K."/>
            <person name="Makita H."/>
            <person name="Sekine M."/>
            <person name="Obayashi M."/>
            <person name="Nishi T."/>
            <person name="Shibahara T."/>
            <person name="Tanaka T."/>
            <person name="Ishii S."/>
            <person name="Yamamoto J."/>
            <person name="Saito K."/>
            <person name="Kawai Y."/>
            <person name="Isono Y."/>
            <person name="Nakamura Y."/>
            <person name="Nagahari K."/>
            <person name="Murakami K."/>
            <person name="Yasuda T."/>
            <person name="Iwayanagi T."/>
            <person name="Wagatsuma M."/>
            <person name="Shiratori A."/>
            <person name="Sudo H."/>
            <person name="Hosoiri T."/>
            <person name="Kaku Y."/>
            <person name="Kodaira H."/>
            <person name="Kondo H."/>
            <person name="Sugawara M."/>
            <person name="Takahashi M."/>
            <person name="Kanda K."/>
            <person name="Yokoi T."/>
            <person name="Furuya T."/>
            <person name="Kikkawa E."/>
            <person name="Omura Y."/>
            <person name="Abe K."/>
            <person name="Kamihara K."/>
            <person name="Katsuta N."/>
            <person name="Sato K."/>
            <person name="Tanikawa M."/>
            <person name="Yamazaki M."/>
            <person name="Ninomiya K."/>
            <person name="Ishibashi T."/>
            <person name="Yamashita H."/>
            <person name="Murakawa K."/>
            <person name="Fujimori K."/>
            <person name="Tanai H."/>
            <person name="Kimata M."/>
            <person name="Watanabe M."/>
            <person name="Hiraoka S."/>
            <person name="Chiba Y."/>
            <person name="Ishida S."/>
            <person name="Ono Y."/>
            <person name="Takiguchi S."/>
            <person name="Watanabe S."/>
            <person name="Yosida M."/>
            <person name="Hotuta T."/>
            <person name="Kusano J."/>
            <person name="Kanehori K."/>
            <person name="Takahashi-Fujii A."/>
            <person name="Hara H."/>
            <person name="Tanase T.-O."/>
            <person name="Nomura Y."/>
            <person name="Togiya S."/>
            <person name="Komai F."/>
            <person name="Hara R."/>
            <person name="Takeuchi K."/>
            <person name="Arita M."/>
            <person name="Imose N."/>
            <person name="Musashino K."/>
            <person name="Yuuki H."/>
            <person name="Oshima A."/>
            <person name="Sasaki N."/>
            <person name="Aotsuka S."/>
            <person name="Yoshikawa Y."/>
            <person name="Matsunawa H."/>
            <person name="Ichihara T."/>
            <person name="Shiohata N."/>
            <person name="Sano S."/>
            <person name="Moriya S."/>
            <person name="Momiyama H."/>
            <person name="Satoh N."/>
            <person name="Takami S."/>
            <person name="Terashima Y."/>
            <person name="Suzuki O."/>
            <person name="Nakagawa S."/>
            <person name="Senoh A."/>
            <person name="Mizoguchi H."/>
            <person name="Goto Y."/>
            <person name="Shimizu F."/>
            <person name="Wakebe H."/>
            <person name="Hishigaki H."/>
            <person name="Watanabe T."/>
            <person name="Sugiyama A."/>
            <person name="Takemoto M."/>
            <person name="Kawakami B."/>
            <person name="Yamazaki M."/>
            <person name="Watanabe K."/>
            <person name="Kumagai A."/>
            <person name="Itakura S."/>
            <person name="Fukuzumi Y."/>
            <person name="Fujimori Y."/>
            <person name="Komiyama M."/>
            <person name="Tashiro H."/>
            <person name="Tanigami A."/>
            <person name="Fujiwara T."/>
            <person name="Ono T."/>
            <person name="Yamada K."/>
            <person name="Fujii Y."/>
            <person name="Ozaki K."/>
            <person name="Hirao M."/>
            <person name="Ohmori Y."/>
            <person name="Kawabata A."/>
            <person name="Hikiji T."/>
            <person name="Kobatake N."/>
            <person name="Inagaki H."/>
            <person name="Ikema Y."/>
            <person name="Okamoto S."/>
            <person name="Okitani R."/>
            <person name="Kawakami T."/>
            <person name="Noguchi S."/>
            <person name="Itoh T."/>
            <person name="Shigeta K."/>
            <person name="Senba T."/>
            <person name="Matsumura K."/>
            <person name="Nakajima Y."/>
            <person name="Mizuno T."/>
            <person name="Morinaga M."/>
            <person name="Sasaki M."/>
            <person name="Togashi T."/>
            <person name="Oyama M."/>
            <person name="Hata H."/>
            <person name="Watanabe M."/>
            <person name="Komatsu T."/>
            <person name="Mizushima-Sugano J."/>
            <person name="Satoh T."/>
            <person name="Shirai Y."/>
            <person name="Takahashi Y."/>
            <person name="Nakagawa K."/>
            <person name="Okumura K."/>
            <person name="Nagase T."/>
            <person name="Nomura N."/>
            <person name="Kikuchi H."/>
            <person name="Masuho Y."/>
            <person name="Yamashita R."/>
            <person name="Nakai K."/>
            <person name="Yada T."/>
            <person name="Nakamura Y."/>
            <person name="Ohara O."/>
            <person name="Isogai T."/>
            <person name="Sugano S."/>
        </authorList>
    </citation>
    <scope>NUCLEOTIDE SEQUENCE [LARGE SCALE MRNA] (ISOFORM 2)</scope>
    <source>
        <tissue>Thymus</tissue>
    </source>
</reference>
<reference key="2">
    <citation type="journal article" date="2004" name="Nature">
        <title>DNA sequence and analysis of human chromosome 9.</title>
        <authorList>
            <person name="Humphray S.J."/>
            <person name="Oliver K."/>
            <person name="Hunt A.R."/>
            <person name="Plumb R.W."/>
            <person name="Loveland J.E."/>
            <person name="Howe K.L."/>
            <person name="Andrews T.D."/>
            <person name="Searle S."/>
            <person name="Hunt S.E."/>
            <person name="Scott C.E."/>
            <person name="Jones M.C."/>
            <person name="Ainscough R."/>
            <person name="Almeida J.P."/>
            <person name="Ambrose K.D."/>
            <person name="Ashwell R.I.S."/>
            <person name="Babbage A.K."/>
            <person name="Babbage S."/>
            <person name="Bagguley C.L."/>
            <person name="Bailey J."/>
            <person name="Banerjee R."/>
            <person name="Barker D.J."/>
            <person name="Barlow K.F."/>
            <person name="Bates K."/>
            <person name="Beasley H."/>
            <person name="Beasley O."/>
            <person name="Bird C.P."/>
            <person name="Bray-Allen S."/>
            <person name="Brown A.J."/>
            <person name="Brown J.Y."/>
            <person name="Burford D."/>
            <person name="Burrill W."/>
            <person name="Burton J."/>
            <person name="Carder C."/>
            <person name="Carter N.P."/>
            <person name="Chapman J.C."/>
            <person name="Chen Y."/>
            <person name="Clarke G."/>
            <person name="Clark S.Y."/>
            <person name="Clee C.M."/>
            <person name="Clegg S."/>
            <person name="Collier R.E."/>
            <person name="Corby N."/>
            <person name="Crosier M."/>
            <person name="Cummings A.T."/>
            <person name="Davies J."/>
            <person name="Dhami P."/>
            <person name="Dunn M."/>
            <person name="Dutta I."/>
            <person name="Dyer L.W."/>
            <person name="Earthrowl M.E."/>
            <person name="Faulkner L."/>
            <person name="Fleming C.J."/>
            <person name="Frankish A."/>
            <person name="Frankland J.A."/>
            <person name="French L."/>
            <person name="Fricker D.G."/>
            <person name="Garner P."/>
            <person name="Garnett J."/>
            <person name="Ghori J."/>
            <person name="Gilbert J.G.R."/>
            <person name="Glison C."/>
            <person name="Grafham D.V."/>
            <person name="Gribble S."/>
            <person name="Griffiths C."/>
            <person name="Griffiths-Jones S."/>
            <person name="Grocock R."/>
            <person name="Guy J."/>
            <person name="Hall R.E."/>
            <person name="Hammond S."/>
            <person name="Harley J.L."/>
            <person name="Harrison E.S.I."/>
            <person name="Hart E.A."/>
            <person name="Heath P.D."/>
            <person name="Henderson C.D."/>
            <person name="Hopkins B.L."/>
            <person name="Howard P.J."/>
            <person name="Howden P.J."/>
            <person name="Huckle E."/>
            <person name="Johnson C."/>
            <person name="Johnson D."/>
            <person name="Joy A.A."/>
            <person name="Kay M."/>
            <person name="Keenan S."/>
            <person name="Kershaw J.K."/>
            <person name="Kimberley A.M."/>
            <person name="King A."/>
            <person name="Knights A."/>
            <person name="Laird G.K."/>
            <person name="Langford C."/>
            <person name="Lawlor S."/>
            <person name="Leongamornlert D.A."/>
            <person name="Leversha M."/>
            <person name="Lloyd C."/>
            <person name="Lloyd D.M."/>
            <person name="Lovell J."/>
            <person name="Martin S."/>
            <person name="Mashreghi-Mohammadi M."/>
            <person name="Matthews L."/>
            <person name="McLaren S."/>
            <person name="McLay K.E."/>
            <person name="McMurray A."/>
            <person name="Milne S."/>
            <person name="Nickerson T."/>
            <person name="Nisbett J."/>
            <person name="Nordsiek G."/>
            <person name="Pearce A.V."/>
            <person name="Peck A.I."/>
            <person name="Porter K.M."/>
            <person name="Pandian R."/>
            <person name="Pelan S."/>
            <person name="Phillimore B."/>
            <person name="Povey S."/>
            <person name="Ramsey Y."/>
            <person name="Rand V."/>
            <person name="Scharfe M."/>
            <person name="Sehra H.K."/>
            <person name="Shownkeen R."/>
            <person name="Sims S.K."/>
            <person name="Skuce C.D."/>
            <person name="Smith M."/>
            <person name="Steward C.A."/>
            <person name="Swarbreck D."/>
            <person name="Sycamore N."/>
            <person name="Tester J."/>
            <person name="Thorpe A."/>
            <person name="Tracey A."/>
            <person name="Tromans A."/>
            <person name="Thomas D.W."/>
            <person name="Wall M."/>
            <person name="Wallis J.M."/>
            <person name="West A.P."/>
            <person name="Whitehead S.L."/>
            <person name="Willey D.L."/>
            <person name="Williams S.A."/>
            <person name="Wilming L."/>
            <person name="Wray P.W."/>
            <person name="Young L."/>
            <person name="Ashurst J.L."/>
            <person name="Coulson A."/>
            <person name="Blocker H."/>
            <person name="Durbin R.M."/>
            <person name="Sulston J.E."/>
            <person name="Hubbard T."/>
            <person name="Jackson M.J."/>
            <person name="Bentley D.R."/>
            <person name="Beck S."/>
            <person name="Rogers J."/>
            <person name="Dunham I."/>
        </authorList>
    </citation>
    <scope>NUCLEOTIDE SEQUENCE [LARGE SCALE GENOMIC DNA]</scope>
</reference>
<reference key="3">
    <citation type="submission" date="2005-07" db="EMBL/GenBank/DDBJ databases">
        <authorList>
            <person name="Mural R.J."/>
            <person name="Istrail S."/>
            <person name="Sutton G.G."/>
            <person name="Florea L."/>
            <person name="Halpern A.L."/>
            <person name="Mobarry C.M."/>
            <person name="Lippert R."/>
            <person name="Walenz B."/>
            <person name="Shatkay H."/>
            <person name="Dew I."/>
            <person name="Miller J.R."/>
            <person name="Flanigan M.J."/>
            <person name="Edwards N.J."/>
            <person name="Bolanos R."/>
            <person name="Fasulo D."/>
            <person name="Halldorsson B.V."/>
            <person name="Hannenhalli S."/>
            <person name="Turner R."/>
            <person name="Yooseph S."/>
            <person name="Lu F."/>
            <person name="Nusskern D.R."/>
            <person name="Shue B.C."/>
            <person name="Zheng X.H."/>
            <person name="Zhong F."/>
            <person name="Delcher A.L."/>
            <person name="Huson D.H."/>
            <person name="Kravitz S.A."/>
            <person name="Mouchard L."/>
            <person name="Reinert K."/>
            <person name="Remington K.A."/>
            <person name="Clark A.G."/>
            <person name="Waterman M.S."/>
            <person name="Eichler E.E."/>
            <person name="Adams M.D."/>
            <person name="Hunkapiller M.W."/>
            <person name="Myers E.W."/>
            <person name="Venter J.C."/>
        </authorList>
    </citation>
    <scope>NUCLEOTIDE SEQUENCE [LARGE SCALE GENOMIC DNA]</scope>
</reference>
<reference key="4">
    <citation type="journal article" date="2004" name="Genome Res.">
        <title>The status, quality, and expansion of the NIH full-length cDNA project: the Mammalian Gene Collection (MGC).</title>
        <authorList>
            <consortium name="The MGC Project Team"/>
        </authorList>
    </citation>
    <scope>NUCLEOTIDE SEQUENCE [LARGE SCALE MRNA] (ISOFORMS 1 AND 2)</scope>
</reference>
<reference key="5">
    <citation type="journal article" date="2009" name="Nat. Cell Biol.">
        <title>SCAI acts as a suppressor of cancer cell invasion through the transcriptional control of beta1-integrin.</title>
        <authorList>
            <person name="Brandt D.T."/>
            <person name="Baarlink C."/>
            <person name="Kitzing T.M."/>
            <person name="Kremmer E."/>
            <person name="Ivaska J."/>
            <person name="Nollau P."/>
            <person name="Grosse R."/>
        </authorList>
    </citation>
    <scope>FUNCTION</scope>
    <scope>INTERACTION WITH MRTFA AND SRF</scope>
    <scope>SUBCELLULAR LOCATION</scope>
</reference>
<organism>
    <name type="scientific">Homo sapiens</name>
    <name type="common">Human</name>
    <dbReference type="NCBI Taxonomy" id="9606"/>
    <lineage>
        <taxon>Eukaryota</taxon>
        <taxon>Metazoa</taxon>
        <taxon>Chordata</taxon>
        <taxon>Craniata</taxon>
        <taxon>Vertebrata</taxon>
        <taxon>Euteleostomi</taxon>
        <taxon>Mammalia</taxon>
        <taxon>Eutheria</taxon>
        <taxon>Euarchontoglires</taxon>
        <taxon>Primates</taxon>
        <taxon>Haplorrhini</taxon>
        <taxon>Catarrhini</taxon>
        <taxon>Hominidae</taxon>
        <taxon>Homo</taxon>
    </lineage>
</organism>
<protein>
    <recommendedName>
        <fullName>Protein SCAI</fullName>
    </recommendedName>
    <alternativeName>
        <fullName>Suppressor of cancer cell invasion protein</fullName>
    </alternativeName>
</protein>
<dbReference type="EMBL" id="AK098024">
    <property type="protein sequence ID" value="BAC05217.1"/>
    <property type="molecule type" value="mRNA"/>
</dbReference>
<dbReference type="EMBL" id="AL445930">
    <property type="status" value="NOT_ANNOTATED_CDS"/>
    <property type="molecule type" value="Genomic_DNA"/>
</dbReference>
<dbReference type="EMBL" id="AL451125">
    <property type="status" value="NOT_ANNOTATED_CDS"/>
    <property type="molecule type" value="Genomic_DNA"/>
</dbReference>
<dbReference type="EMBL" id="CH471090">
    <property type="protein sequence ID" value="EAW87608.1"/>
    <property type="molecule type" value="Genomic_DNA"/>
</dbReference>
<dbReference type="EMBL" id="CH471090">
    <property type="protein sequence ID" value="EAW87609.1"/>
    <property type="molecule type" value="Genomic_DNA"/>
</dbReference>
<dbReference type="EMBL" id="BC104030">
    <property type="protein sequence ID" value="AAI04031.1"/>
    <property type="molecule type" value="mRNA"/>
</dbReference>
<dbReference type="EMBL" id="BC104031">
    <property type="protein sequence ID" value="AAI04032.1"/>
    <property type="molecule type" value="mRNA"/>
</dbReference>
<dbReference type="CCDS" id="CCDS43877.1">
    <molecule id="Q8N9R8-2"/>
</dbReference>
<dbReference type="CCDS" id="CCDS48017.1">
    <molecule id="Q8N9R8-1"/>
</dbReference>
<dbReference type="RefSeq" id="NP_001138349.1">
    <molecule id="Q8N9R8-1"/>
    <property type="nucleotide sequence ID" value="NM_001144877.3"/>
</dbReference>
<dbReference type="RefSeq" id="NP_775961.2">
    <molecule id="Q8N9R8-2"/>
    <property type="nucleotide sequence ID" value="NM_173690.5"/>
</dbReference>
<dbReference type="BioGRID" id="130333">
    <property type="interactions" value="60"/>
</dbReference>
<dbReference type="FunCoup" id="Q8N9R8">
    <property type="interactions" value="2889"/>
</dbReference>
<dbReference type="IntAct" id="Q8N9R8">
    <property type="interactions" value="28"/>
</dbReference>
<dbReference type="MINT" id="Q8N9R8"/>
<dbReference type="STRING" id="9606.ENSP00000362650"/>
<dbReference type="iPTMnet" id="Q8N9R8"/>
<dbReference type="PhosphoSitePlus" id="Q8N9R8"/>
<dbReference type="SwissPalm" id="Q8N9R8"/>
<dbReference type="BioMuta" id="SCAI"/>
<dbReference type="DMDM" id="251757332"/>
<dbReference type="jPOST" id="Q8N9R8"/>
<dbReference type="MassIVE" id="Q8N9R8"/>
<dbReference type="PaxDb" id="9606-ENSP00000362650"/>
<dbReference type="PeptideAtlas" id="Q8N9R8"/>
<dbReference type="ProteomicsDB" id="72576">
    <molecule id="Q8N9R8-1"/>
</dbReference>
<dbReference type="ProteomicsDB" id="72577">
    <molecule id="Q8N9R8-2"/>
</dbReference>
<dbReference type="Pumba" id="Q8N9R8"/>
<dbReference type="Antibodypedia" id="7729">
    <property type="antibodies" value="36 antibodies from 15 providers"/>
</dbReference>
<dbReference type="DNASU" id="286205"/>
<dbReference type="Ensembl" id="ENST00000336505.11">
    <molecule id="Q8N9R8-1"/>
    <property type="protein sequence ID" value="ENSP00000336756.6"/>
    <property type="gene ID" value="ENSG00000173611.18"/>
</dbReference>
<dbReference type="Ensembl" id="ENST00000373549.8">
    <molecule id="Q8N9R8-2"/>
    <property type="protein sequence ID" value="ENSP00000362650.4"/>
    <property type="gene ID" value="ENSG00000173611.18"/>
</dbReference>
<dbReference type="GeneID" id="286205"/>
<dbReference type="KEGG" id="hsa:286205"/>
<dbReference type="MANE-Select" id="ENST00000336505.11">
    <property type="protein sequence ID" value="ENSP00000336756.6"/>
    <property type="RefSeq nucleotide sequence ID" value="NM_001144877.3"/>
    <property type="RefSeq protein sequence ID" value="NP_001138349.1"/>
</dbReference>
<dbReference type="UCSC" id="uc004bpd.4">
    <molecule id="Q8N9R8-1"/>
    <property type="organism name" value="human"/>
</dbReference>
<dbReference type="AGR" id="HGNC:26709"/>
<dbReference type="CTD" id="286205"/>
<dbReference type="DisGeNET" id="286205"/>
<dbReference type="GeneCards" id="SCAI"/>
<dbReference type="HGNC" id="HGNC:26709">
    <property type="gene designation" value="SCAI"/>
</dbReference>
<dbReference type="HPA" id="ENSG00000173611">
    <property type="expression patterns" value="Tissue enhanced (lymphoid)"/>
</dbReference>
<dbReference type="MIM" id="619222">
    <property type="type" value="gene"/>
</dbReference>
<dbReference type="neXtProt" id="NX_Q8N9R8"/>
<dbReference type="OpenTargets" id="ENSG00000173611"/>
<dbReference type="PharmGKB" id="PA165586233"/>
<dbReference type="VEuPathDB" id="HostDB:ENSG00000173611"/>
<dbReference type="eggNOG" id="ENOG502QPT4">
    <property type="taxonomic scope" value="Eukaryota"/>
</dbReference>
<dbReference type="GeneTree" id="ENSGT00390000009566"/>
<dbReference type="HOGENOM" id="CLU_020095_2_1_1"/>
<dbReference type="InParanoid" id="Q8N9R8"/>
<dbReference type="OMA" id="HCIHPGD"/>
<dbReference type="OrthoDB" id="525027at2759"/>
<dbReference type="PAN-GO" id="Q8N9R8">
    <property type="GO annotations" value="2 GO annotations based on evolutionary models"/>
</dbReference>
<dbReference type="PhylomeDB" id="Q8N9R8"/>
<dbReference type="TreeFam" id="TF324872"/>
<dbReference type="PathwayCommons" id="Q8N9R8"/>
<dbReference type="Reactome" id="R-HSA-5663220">
    <property type="pathway name" value="RHO GTPases Activate Formins"/>
</dbReference>
<dbReference type="SignaLink" id="Q8N9R8"/>
<dbReference type="BioGRID-ORCS" id="286205">
    <property type="hits" value="16 hits in 1160 CRISPR screens"/>
</dbReference>
<dbReference type="CD-CODE" id="FB4E32DD">
    <property type="entry name" value="Presynaptic clusters and postsynaptic densities"/>
</dbReference>
<dbReference type="ChiTaRS" id="SCAI">
    <property type="organism name" value="human"/>
</dbReference>
<dbReference type="GenomeRNAi" id="286205"/>
<dbReference type="Pharos" id="Q8N9R8">
    <property type="development level" value="Tbio"/>
</dbReference>
<dbReference type="PRO" id="PR:Q8N9R8"/>
<dbReference type="Proteomes" id="UP000005640">
    <property type="component" value="Chromosome 9"/>
</dbReference>
<dbReference type="RNAct" id="Q8N9R8">
    <property type="molecule type" value="protein"/>
</dbReference>
<dbReference type="Bgee" id="ENSG00000173611">
    <property type="expression patterns" value="Expressed in endothelial cell and 178 other cell types or tissues"/>
</dbReference>
<dbReference type="ExpressionAtlas" id="Q8N9R8">
    <property type="expression patterns" value="baseline and differential"/>
</dbReference>
<dbReference type="GO" id="GO:0005737">
    <property type="term" value="C:cytoplasm"/>
    <property type="evidence" value="ECO:0007669"/>
    <property type="project" value="UniProtKB-SubCell"/>
</dbReference>
<dbReference type="GO" id="GO:0031965">
    <property type="term" value="C:nuclear membrane"/>
    <property type="evidence" value="ECO:0000314"/>
    <property type="project" value="HPA"/>
</dbReference>
<dbReference type="GO" id="GO:0005654">
    <property type="term" value="C:nucleoplasm"/>
    <property type="evidence" value="ECO:0000314"/>
    <property type="project" value="HPA"/>
</dbReference>
<dbReference type="GO" id="GO:0005634">
    <property type="term" value="C:nucleus"/>
    <property type="evidence" value="ECO:0000318"/>
    <property type="project" value="GO_Central"/>
</dbReference>
<dbReference type="GO" id="GO:0003714">
    <property type="term" value="F:transcription corepressor activity"/>
    <property type="evidence" value="ECO:0000315"/>
    <property type="project" value="UniProtKB"/>
</dbReference>
<dbReference type="GO" id="GO:0006351">
    <property type="term" value="P:DNA-templated transcription"/>
    <property type="evidence" value="ECO:0007669"/>
    <property type="project" value="InterPro"/>
</dbReference>
<dbReference type="GO" id="GO:0030336">
    <property type="term" value="P:negative regulation of cell migration"/>
    <property type="evidence" value="ECO:0000315"/>
    <property type="project" value="UniProtKB"/>
</dbReference>
<dbReference type="GO" id="GO:0035024">
    <property type="term" value="P:negative regulation of Rho protein signal transduction"/>
    <property type="evidence" value="ECO:0000250"/>
    <property type="project" value="UniProtKB"/>
</dbReference>
<dbReference type="InterPro" id="IPR022709">
    <property type="entry name" value="SCAI"/>
</dbReference>
<dbReference type="InterPro" id="IPR016607">
    <property type="entry name" value="SCAI_metazoan/Viridiplantae"/>
</dbReference>
<dbReference type="PANTHER" id="PTHR21243">
    <property type="entry name" value="PROTEIN SCAI"/>
    <property type="match status" value="1"/>
</dbReference>
<dbReference type="Pfam" id="PF12070">
    <property type="entry name" value="SCAI"/>
    <property type="match status" value="1"/>
</dbReference>
<dbReference type="PIRSF" id="PIRSF013022">
    <property type="entry name" value="UCP013022"/>
    <property type="match status" value="1"/>
</dbReference>
<gene>
    <name type="primary">SCAI</name>
    <name type="synonym">C9orf126</name>
</gene>
<feature type="chain" id="PRO_0000089735" description="Protein SCAI">
    <location>
        <begin position="1"/>
        <end position="606"/>
    </location>
</feature>
<feature type="transmembrane region" description="Helical" evidence="3">
    <location>
        <begin position="472"/>
        <end position="492"/>
    </location>
</feature>
<feature type="region of interest" description="Necessary to inhibit MRTFA-induced SRF transcriptional activity" evidence="1">
    <location>
        <begin position="1"/>
        <end position="212"/>
    </location>
</feature>
<feature type="region of interest" description="Disordered" evidence="4">
    <location>
        <begin position="1"/>
        <end position="35"/>
    </location>
</feature>
<feature type="region of interest" description="Required for interaction with MRTFA" evidence="1">
    <location>
        <begin position="71"/>
        <end position="173"/>
    </location>
</feature>
<feature type="modified residue" description="Phosphotyrosine" evidence="2">
    <location>
        <position position="64"/>
    </location>
</feature>
<feature type="splice variant" id="VSP_015120" description="In isoform 2." evidence="6 7">
    <original>R</original>
    <variation>SIRGSGDSSHSQSQGERYQHFTEK</variation>
    <location>
        <position position="33"/>
    </location>
</feature>
<feature type="sequence variant" id="VAR_023236" description="In dbSNP:rs589292.">
    <original>A</original>
    <variation>T</variation>
    <location>
        <position position="37"/>
    </location>
</feature>
<feature type="sequence conflict" description="In Ref. 1; BAC05217." evidence="8" ref="1">
    <original>I</original>
    <variation>F</variation>
    <location>
        <position position="432"/>
    </location>
</feature>
<feature type="sequence conflict" description="In Ref. 1; BAC05217." evidence="8" ref="1">
    <original>M</original>
    <variation>T</variation>
    <location>
        <position position="553"/>
    </location>
</feature>
<proteinExistence type="evidence at protein level"/>
<evidence type="ECO:0000250" key="1"/>
<evidence type="ECO:0000250" key="2">
    <source>
        <dbReference type="UniProtKB" id="Q8C8N2"/>
    </source>
</evidence>
<evidence type="ECO:0000255" key="3"/>
<evidence type="ECO:0000256" key="4">
    <source>
        <dbReference type="SAM" id="MobiDB-lite"/>
    </source>
</evidence>
<evidence type="ECO:0000269" key="5">
    <source>
    </source>
</evidence>
<evidence type="ECO:0000303" key="6">
    <source>
    </source>
</evidence>
<evidence type="ECO:0000303" key="7">
    <source>
    </source>
</evidence>
<evidence type="ECO:0000305" key="8"/>